<gene>
    <name evidence="1" type="primary">tmk</name>
    <name type="ordered locus">Rsph17029_2202</name>
</gene>
<reference key="1">
    <citation type="submission" date="2007-02" db="EMBL/GenBank/DDBJ databases">
        <title>Complete sequence of chromosome 1 of Rhodobacter sphaeroides ATCC 17029.</title>
        <authorList>
            <person name="Copeland A."/>
            <person name="Lucas S."/>
            <person name="Lapidus A."/>
            <person name="Barry K."/>
            <person name="Detter J.C."/>
            <person name="Glavina del Rio T."/>
            <person name="Hammon N."/>
            <person name="Israni S."/>
            <person name="Dalin E."/>
            <person name="Tice H."/>
            <person name="Pitluck S."/>
            <person name="Kiss H."/>
            <person name="Brettin T."/>
            <person name="Bruce D."/>
            <person name="Han C."/>
            <person name="Tapia R."/>
            <person name="Gilna P."/>
            <person name="Schmutz J."/>
            <person name="Larimer F."/>
            <person name="Land M."/>
            <person name="Hauser L."/>
            <person name="Kyrpides N."/>
            <person name="Mikhailova N."/>
            <person name="Richardson P."/>
            <person name="Mackenzie C."/>
            <person name="Choudhary M."/>
            <person name="Donohue T.J."/>
            <person name="Kaplan S."/>
        </authorList>
    </citation>
    <scope>NUCLEOTIDE SEQUENCE [LARGE SCALE GENOMIC DNA]</scope>
    <source>
        <strain>ATCC 17029 / ATH 2.4.9</strain>
    </source>
</reference>
<accession>A3PLT9</accession>
<protein>
    <recommendedName>
        <fullName evidence="1">Thymidylate kinase</fullName>
        <ecNumber evidence="1">2.7.4.9</ecNumber>
    </recommendedName>
    <alternativeName>
        <fullName evidence="1">dTMP kinase</fullName>
    </alternativeName>
</protein>
<comment type="function">
    <text evidence="1">Phosphorylation of dTMP to form dTDP in both de novo and salvage pathways of dTTP synthesis.</text>
</comment>
<comment type="catalytic activity">
    <reaction evidence="1">
        <text>dTMP + ATP = dTDP + ADP</text>
        <dbReference type="Rhea" id="RHEA:13517"/>
        <dbReference type="ChEBI" id="CHEBI:30616"/>
        <dbReference type="ChEBI" id="CHEBI:58369"/>
        <dbReference type="ChEBI" id="CHEBI:63528"/>
        <dbReference type="ChEBI" id="CHEBI:456216"/>
        <dbReference type="EC" id="2.7.4.9"/>
    </reaction>
</comment>
<comment type="similarity">
    <text evidence="1">Belongs to the thymidylate kinase family.</text>
</comment>
<organism>
    <name type="scientific">Cereibacter sphaeroides (strain ATCC 17029 / ATH 2.4.9)</name>
    <name type="common">Rhodobacter sphaeroides</name>
    <dbReference type="NCBI Taxonomy" id="349101"/>
    <lineage>
        <taxon>Bacteria</taxon>
        <taxon>Pseudomonadati</taxon>
        <taxon>Pseudomonadota</taxon>
        <taxon>Alphaproteobacteria</taxon>
        <taxon>Rhodobacterales</taxon>
        <taxon>Paracoccaceae</taxon>
        <taxon>Cereibacter</taxon>
    </lineage>
</organism>
<proteinExistence type="inferred from homology"/>
<name>KTHY_CERS1</name>
<keyword id="KW-0067">ATP-binding</keyword>
<keyword id="KW-0418">Kinase</keyword>
<keyword id="KW-0545">Nucleotide biosynthesis</keyword>
<keyword id="KW-0547">Nucleotide-binding</keyword>
<keyword id="KW-0808">Transferase</keyword>
<dbReference type="EC" id="2.7.4.9" evidence="1"/>
<dbReference type="EMBL" id="CP000577">
    <property type="protein sequence ID" value="ABN77305.1"/>
    <property type="molecule type" value="Genomic_DNA"/>
</dbReference>
<dbReference type="RefSeq" id="WP_002720716.1">
    <property type="nucleotide sequence ID" value="NC_009049.1"/>
</dbReference>
<dbReference type="SMR" id="A3PLT9"/>
<dbReference type="GeneID" id="3717943"/>
<dbReference type="KEGG" id="rsh:Rsph17029_2202"/>
<dbReference type="HOGENOM" id="CLU_049131_0_2_5"/>
<dbReference type="GO" id="GO:0005829">
    <property type="term" value="C:cytosol"/>
    <property type="evidence" value="ECO:0007669"/>
    <property type="project" value="TreeGrafter"/>
</dbReference>
<dbReference type="GO" id="GO:0005524">
    <property type="term" value="F:ATP binding"/>
    <property type="evidence" value="ECO:0007669"/>
    <property type="project" value="UniProtKB-UniRule"/>
</dbReference>
<dbReference type="GO" id="GO:0004798">
    <property type="term" value="F:dTMP kinase activity"/>
    <property type="evidence" value="ECO:0007669"/>
    <property type="project" value="UniProtKB-UniRule"/>
</dbReference>
<dbReference type="GO" id="GO:0006233">
    <property type="term" value="P:dTDP biosynthetic process"/>
    <property type="evidence" value="ECO:0007669"/>
    <property type="project" value="InterPro"/>
</dbReference>
<dbReference type="GO" id="GO:0006235">
    <property type="term" value="P:dTTP biosynthetic process"/>
    <property type="evidence" value="ECO:0007669"/>
    <property type="project" value="UniProtKB-UniRule"/>
</dbReference>
<dbReference type="GO" id="GO:0006227">
    <property type="term" value="P:dUDP biosynthetic process"/>
    <property type="evidence" value="ECO:0007669"/>
    <property type="project" value="TreeGrafter"/>
</dbReference>
<dbReference type="CDD" id="cd01672">
    <property type="entry name" value="TMPK"/>
    <property type="match status" value="1"/>
</dbReference>
<dbReference type="FunFam" id="3.40.50.300:FF:000225">
    <property type="entry name" value="Thymidylate kinase"/>
    <property type="match status" value="1"/>
</dbReference>
<dbReference type="Gene3D" id="3.40.50.300">
    <property type="entry name" value="P-loop containing nucleotide triphosphate hydrolases"/>
    <property type="match status" value="1"/>
</dbReference>
<dbReference type="HAMAP" id="MF_00165">
    <property type="entry name" value="Thymidylate_kinase"/>
    <property type="match status" value="1"/>
</dbReference>
<dbReference type="InterPro" id="IPR027417">
    <property type="entry name" value="P-loop_NTPase"/>
</dbReference>
<dbReference type="InterPro" id="IPR039430">
    <property type="entry name" value="Thymidylate_kin-like_dom"/>
</dbReference>
<dbReference type="InterPro" id="IPR018095">
    <property type="entry name" value="Thymidylate_kin_CS"/>
</dbReference>
<dbReference type="InterPro" id="IPR018094">
    <property type="entry name" value="Thymidylate_kinase"/>
</dbReference>
<dbReference type="NCBIfam" id="TIGR00041">
    <property type="entry name" value="DTMP_kinase"/>
    <property type="match status" value="1"/>
</dbReference>
<dbReference type="PANTHER" id="PTHR10344">
    <property type="entry name" value="THYMIDYLATE KINASE"/>
    <property type="match status" value="1"/>
</dbReference>
<dbReference type="PANTHER" id="PTHR10344:SF4">
    <property type="entry name" value="UMP-CMP KINASE 2, MITOCHONDRIAL"/>
    <property type="match status" value="1"/>
</dbReference>
<dbReference type="Pfam" id="PF02223">
    <property type="entry name" value="Thymidylate_kin"/>
    <property type="match status" value="1"/>
</dbReference>
<dbReference type="SUPFAM" id="SSF52540">
    <property type="entry name" value="P-loop containing nucleoside triphosphate hydrolases"/>
    <property type="match status" value="1"/>
</dbReference>
<dbReference type="PROSITE" id="PS01331">
    <property type="entry name" value="THYMIDYLATE_KINASE"/>
    <property type="match status" value="1"/>
</dbReference>
<evidence type="ECO:0000255" key="1">
    <source>
        <dbReference type="HAMAP-Rule" id="MF_00165"/>
    </source>
</evidence>
<sequence length="217" mass="22856">MGAQGFFLAVEGIDGSGKSGIVRSLAAHLGAEGRDVLVTREPGGTPEGEAIRGLVLAGADEAWDPMAELLLMTAARVQHVRRVIAPALAQGRVVISDRYAGSTLAYQGTGRGLSEAFIRTLHAEATGDLWPDLTLVLDLEAGIGLARSRRRLTGETLDEGRFESLDLAFHERIRAAFLAQAARDPGRHAVIDASGTPEEVQARACAALAPFLAQAPV</sequence>
<feature type="chain" id="PRO_1000023266" description="Thymidylate kinase">
    <location>
        <begin position="1"/>
        <end position="217"/>
    </location>
</feature>
<feature type="binding site" evidence="1">
    <location>
        <begin position="12"/>
        <end position="19"/>
    </location>
    <ligand>
        <name>ATP</name>
        <dbReference type="ChEBI" id="CHEBI:30616"/>
    </ligand>
</feature>